<dbReference type="EMBL" id="AE006468">
    <property type="protein sequence ID" value="AAL20087.1"/>
    <property type="molecule type" value="Genomic_DNA"/>
</dbReference>
<dbReference type="RefSeq" id="NP_460128.1">
    <property type="nucleotide sequence ID" value="NC_003197.2"/>
</dbReference>
<dbReference type="RefSeq" id="WP_000739886.1">
    <property type="nucleotide sequence ID" value="NC_003197.2"/>
</dbReference>
<dbReference type="SMR" id="P61351"/>
<dbReference type="STRING" id="99287.STM1157"/>
<dbReference type="PaxDb" id="99287-STM1157"/>
<dbReference type="GeneID" id="1252675"/>
<dbReference type="KEGG" id="stm:STM1157"/>
<dbReference type="PATRIC" id="fig|99287.12.peg.1224"/>
<dbReference type="HOGENOM" id="CLU_071003_1_2_6"/>
<dbReference type="OMA" id="IDKQGQH"/>
<dbReference type="PhylomeDB" id="P61351"/>
<dbReference type="BioCyc" id="SENT99287:STM1157-MONOMER"/>
<dbReference type="Proteomes" id="UP000001014">
    <property type="component" value="Chromosome"/>
</dbReference>
<dbReference type="GO" id="GO:0005615">
    <property type="term" value="C:extracellular space"/>
    <property type="evidence" value="ECO:0000318"/>
    <property type="project" value="GO_Central"/>
</dbReference>
<dbReference type="GO" id="GO:0042597">
    <property type="term" value="C:periplasmic space"/>
    <property type="evidence" value="ECO:0007669"/>
    <property type="project" value="UniProtKB-SubCell"/>
</dbReference>
<dbReference type="Gene3D" id="2.40.128.110">
    <property type="entry name" value="Lipid/polyisoprenoid-binding, YceI-like"/>
    <property type="match status" value="1"/>
</dbReference>
<dbReference type="HAMAP" id="MF_00780">
    <property type="entry name" value="UPF0312"/>
    <property type="match status" value="1"/>
</dbReference>
<dbReference type="InterPro" id="IPR007372">
    <property type="entry name" value="Lipid/polyisoprenoid-bd_YceI"/>
</dbReference>
<dbReference type="InterPro" id="IPR036761">
    <property type="entry name" value="TTHA0802/YceI-like_sf"/>
</dbReference>
<dbReference type="InterPro" id="IPR023480">
    <property type="entry name" value="UPF0312/YceI"/>
</dbReference>
<dbReference type="NCBIfam" id="NF002994">
    <property type="entry name" value="PRK03757.1"/>
    <property type="match status" value="1"/>
</dbReference>
<dbReference type="PANTHER" id="PTHR34406">
    <property type="entry name" value="PROTEIN YCEI"/>
    <property type="match status" value="1"/>
</dbReference>
<dbReference type="PANTHER" id="PTHR34406:SF1">
    <property type="entry name" value="PROTEIN YCEI"/>
    <property type="match status" value="1"/>
</dbReference>
<dbReference type="Pfam" id="PF04264">
    <property type="entry name" value="YceI"/>
    <property type="match status" value="1"/>
</dbReference>
<dbReference type="SMART" id="SM00867">
    <property type="entry name" value="YceI"/>
    <property type="match status" value="1"/>
</dbReference>
<dbReference type="SUPFAM" id="SSF101874">
    <property type="entry name" value="YceI-like"/>
    <property type="match status" value="1"/>
</dbReference>
<keyword id="KW-0574">Periplasm</keyword>
<keyword id="KW-1185">Reference proteome</keyword>
<keyword id="KW-0732">Signal</keyword>
<organism>
    <name type="scientific">Salmonella typhimurium (strain LT2 / SGSC1412 / ATCC 700720)</name>
    <dbReference type="NCBI Taxonomy" id="99287"/>
    <lineage>
        <taxon>Bacteria</taxon>
        <taxon>Pseudomonadati</taxon>
        <taxon>Pseudomonadota</taxon>
        <taxon>Gammaproteobacteria</taxon>
        <taxon>Enterobacterales</taxon>
        <taxon>Enterobacteriaceae</taxon>
        <taxon>Salmonella</taxon>
    </lineage>
</organism>
<gene>
    <name evidence="1" type="primary">yceI</name>
    <name type="ordered locus">STM1157</name>
</gene>
<reference key="1">
    <citation type="journal article" date="2001" name="Nature">
        <title>Complete genome sequence of Salmonella enterica serovar Typhimurium LT2.</title>
        <authorList>
            <person name="McClelland M."/>
            <person name="Sanderson K.E."/>
            <person name="Spieth J."/>
            <person name="Clifton S.W."/>
            <person name="Latreille P."/>
            <person name="Courtney L."/>
            <person name="Porwollik S."/>
            <person name="Ali J."/>
            <person name="Dante M."/>
            <person name="Du F."/>
            <person name="Hou S."/>
            <person name="Layman D."/>
            <person name="Leonard S."/>
            <person name="Nguyen C."/>
            <person name="Scott K."/>
            <person name="Holmes A."/>
            <person name="Grewal N."/>
            <person name="Mulvaney E."/>
            <person name="Ryan E."/>
            <person name="Sun H."/>
            <person name="Florea L."/>
            <person name="Miller W."/>
            <person name="Stoneking T."/>
            <person name="Nhan M."/>
            <person name="Waterston R."/>
            <person name="Wilson R.K."/>
        </authorList>
    </citation>
    <scope>NUCLEOTIDE SEQUENCE [LARGE SCALE GENOMIC DNA]</scope>
    <source>
        <strain>LT2 / SGSC1412 / ATCC 700720</strain>
    </source>
</reference>
<protein>
    <recommendedName>
        <fullName evidence="1">Protein YceI</fullName>
    </recommendedName>
</protein>
<comment type="subcellular location">
    <subcellularLocation>
        <location evidence="1">Periplasm</location>
    </subcellularLocation>
</comment>
<comment type="similarity">
    <text evidence="1">Belongs to the UPF0312 family. Type 1 subfamily.</text>
</comment>
<feature type="signal peptide" evidence="1">
    <location>
        <begin position="1"/>
        <end position="22"/>
    </location>
</feature>
<feature type="chain" id="PRO_0000036284" description="Protein YceI">
    <location>
        <begin position="23"/>
        <end position="191"/>
    </location>
</feature>
<sequence>MKKNLLGFTLASLLFTTGSAVAAEYKIDKEGQHAFVNFRIQHLGYSWLYGTFKDFDGTFTFDEKNPSADKVNVTINTNSVDTNHAERDKHLRSAEFLNVAKFPQATFTSTSVKKEGDELDITGNLTLNGVTKPVTLEAKLMGQGDDPWGGKRAGFEAEGKIKLKDFNITTDLGPASQEVELIISVEGVQQK</sequence>
<proteinExistence type="inferred from homology"/>
<accession>P61351</accession>
<accession>Q8XGU0</accession>
<evidence type="ECO:0000255" key="1">
    <source>
        <dbReference type="HAMAP-Rule" id="MF_00780"/>
    </source>
</evidence>
<name>YCEI_SALTY</name>